<protein>
    <recommendedName>
        <fullName>Importin subunit alpha-5</fullName>
    </recommendedName>
    <alternativeName>
        <fullName>Karyopherin subunit alpha-1</fullName>
    </alternativeName>
</protein>
<accession>Q5ZML1</accession>
<feature type="chain" id="PRO_0000297529" description="Importin subunit alpha-5">
    <location>
        <begin position="1"/>
        <end position="538"/>
    </location>
</feature>
<feature type="domain" description="IBB" evidence="3">
    <location>
        <begin position="1"/>
        <end position="57"/>
    </location>
</feature>
<feature type="repeat" description="ARM 1; truncated">
    <location>
        <begin position="77"/>
        <end position="117"/>
    </location>
</feature>
<feature type="repeat" description="ARM 2">
    <location>
        <begin position="118"/>
        <end position="161"/>
    </location>
</feature>
<feature type="repeat" description="ARM 3">
    <location>
        <begin position="162"/>
        <end position="206"/>
    </location>
</feature>
<feature type="repeat" description="ARM 4">
    <location>
        <begin position="207"/>
        <end position="245"/>
    </location>
</feature>
<feature type="repeat" description="ARM 5">
    <location>
        <begin position="246"/>
        <end position="290"/>
    </location>
</feature>
<feature type="repeat" description="ARM 6">
    <location>
        <begin position="291"/>
        <end position="330"/>
    </location>
</feature>
<feature type="repeat" description="ARM 7">
    <location>
        <begin position="331"/>
        <end position="372"/>
    </location>
</feature>
<feature type="repeat" description="ARM 8">
    <location>
        <begin position="373"/>
        <end position="412"/>
    </location>
</feature>
<feature type="repeat" description="ARM 9">
    <location>
        <begin position="413"/>
        <end position="457"/>
    </location>
</feature>
<feature type="repeat" description="ARM 10; atypical">
    <location>
        <begin position="460"/>
        <end position="504"/>
    </location>
</feature>
<feature type="region of interest" description="Disordered" evidence="4">
    <location>
        <begin position="1"/>
        <end position="38"/>
    </location>
</feature>
<feature type="region of interest" description="NLS binding site (major)" evidence="1">
    <location>
        <begin position="149"/>
        <end position="241"/>
    </location>
</feature>
<feature type="region of interest" description="Binding to RAG1">
    <location>
        <begin position="245"/>
        <end position="437"/>
    </location>
</feature>
<feature type="region of interest" description="NLS binding site (minor)" evidence="1">
    <location>
        <begin position="318"/>
        <end position="406"/>
    </location>
</feature>
<feature type="short sequence motif" description="Nuclear localization signal" evidence="1">
    <location>
        <begin position="42"/>
        <end position="51"/>
    </location>
</feature>
<feature type="compositionally biased region" description="Basic and acidic residues" evidence="4">
    <location>
        <begin position="20"/>
        <end position="38"/>
    </location>
</feature>
<gene>
    <name type="primary">KPNA1</name>
    <name type="ORF">RCJMB04_1l14</name>
</gene>
<evidence type="ECO:0000250" key="1">
    <source>
        <dbReference type="UniProtKB" id="P52293"/>
    </source>
</evidence>
<evidence type="ECO:0000250" key="2">
    <source>
        <dbReference type="UniProtKB" id="P52294"/>
    </source>
</evidence>
<evidence type="ECO:0000255" key="3">
    <source>
        <dbReference type="PROSITE-ProRule" id="PRU00561"/>
    </source>
</evidence>
<evidence type="ECO:0000256" key="4">
    <source>
        <dbReference type="SAM" id="MobiDB-lite"/>
    </source>
</evidence>
<evidence type="ECO:0000305" key="5"/>
<dbReference type="EMBL" id="AJ719373">
    <property type="protein sequence ID" value="CAG31032.1"/>
    <property type="molecule type" value="mRNA"/>
</dbReference>
<dbReference type="RefSeq" id="NP_001025945.1">
    <property type="nucleotide sequence ID" value="NM_001030774.2"/>
</dbReference>
<dbReference type="SMR" id="Q5ZML1"/>
<dbReference type="FunCoup" id="Q5ZML1">
    <property type="interactions" value="939"/>
</dbReference>
<dbReference type="STRING" id="9031.ENSGALP00000034376"/>
<dbReference type="PaxDb" id="9031-ENSGALP00000034376"/>
<dbReference type="GeneID" id="418271"/>
<dbReference type="KEGG" id="gga:418271"/>
<dbReference type="CTD" id="3836"/>
<dbReference type="VEuPathDB" id="HostDB:geneid_418271"/>
<dbReference type="eggNOG" id="KOG0166">
    <property type="taxonomic scope" value="Eukaryota"/>
</dbReference>
<dbReference type="HOGENOM" id="CLU_018084_6_0_1"/>
<dbReference type="InParanoid" id="Q5ZML1"/>
<dbReference type="OMA" id="MVRNATW"/>
<dbReference type="OrthoDB" id="29145at2759"/>
<dbReference type="PhylomeDB" id="Q5ZML1"/>
<dbReference type="TreeFam" id="TF354205"/>
<dbReference type="PRO" id="PR:Q5ZML1"/>
<dbReference type="Proteomes" id="UP000000539">
    <property type="component" value="Unassembled WGS sequence"/>
</dbReference>
<dbReference type="GO" id="GO:0005737">
    <property type="term" value="C:cytoplasm"/>
    <property type="evidence" value="ECO:0007669"/>
    <property type="project" value="UniProtKB-SubCell"/>
</dbReference>
<dbReference type="GO" id="GO:0030425">
    <property type="term" value="C:dendrite"/>
    <property type="evidence" value="ECO:0000250"/>
    <property type="project" value="UniProtKB"/>
</dbReference>
<dbReference type="GO" id="GO:0005654">
    <property type="term" value="C:nucleoplasm"/>
    <property type="evidence" value="ECO:0000318"/>
    <property type="project" value="GO_Central"/>
</dbReference>
<dbReference type="GO" id="GO:0005634">
    <property type="term" value="C:nucleus"/>
    <property type="evidence" value="ECO:0000250"/>
    <property type="project" value="UniProtKB"/>
</dbReference>
<dbReference type="GO" id="GO:0045202">
    <property type="term" value="C:synapse"/>
    <property type="evidence" value="ECO:0007669"/>
    <property type="project" value="GOC"/>
</dbReference>
<dbReference type="GO" id="GO:0061608">
    <property type="term" value="F:nuclear import signal receptor activity"/>
    <property type="evidence" value="ECO:0000318"/>
    <property type="project" value="GO_Central"/>
</dbReference>
<dbReference type="GO" id="GO:0008139">
    <property type="term" value="F:nuclear localization sequence binding"/>
    <property type="evidence" value="ECO:0000318"/>
    <property type="project" value="GO_Central"/>
</dbReference>
<dbReference type="GO" id="GO:0006607">
    <property type="term" value="P:NLS-bearing protein import into nucleus"/>
    <property type="evidence" value="ECO:0000318"/>
    <property type="project" value="GO_Central"/>
</dbReference>
<dbReference type="GO" id="GO:0099527">
    <property type="term" value="P:postsynapse to nucleus signaling pathway"/>
    <property type="evidence" value="ECO:0000318"/>
    <property type="project" value="GO_Central"/>
</dbReference>
<dbReference type="FunFam" id="1.20.5.690:FF:000001">
    <property type="entry name" value="Importin subunit alpha"/>
    <property type="match status" value="1"/>
</dbReference>
<dbReference type="FunFam" id="1.25.10.10:FF:000013">
    <property type="entry name" value="Importin subunit alpha"/>
    <property type="match status" value="1"/>
</dbReference>
<dbReference type="Gene3D" id="1.20.5.690">
    <property type="entry name" value="Importin-alpha, importin-beta-binding domain"/>
    <property type="match status" value="1"/>
</dbReference>
<dbReference type="Gene3D" id="1.25.10.10">
    <property type="entry name" value="Leucine-rich Repeat Variant"/>
    <property type="match status" value="1"/>
</dbReference>
<dbReference type="InterPro" id="IPR011989">
    <property type="entry name" value="ARM-like"/>
</dbReference>
<dbReference type="InterPro" id="IPR016024">
    <property type="entry name" value="ARM-type_fold"/>
</dbReference>
<dbReference type="InterPro" id="IPR032413">
    <property type="entry name" value="Arm_3"/>
</dbReference>
<dbReference type="InterPro" id="IPR000225">
    <property type="entry name" value="Armadillo"/>
</dbReference>
<dbReference type="InterPro" id="IPR002652">
    <property type="entry name" value="Importin-a_IBB"/>
</dbReference>
<dbReference type="InterPro" id="IPR036975">
    <property type="entry name" value="Importin-a_IBB_sf"/>
</dbReference>
<dbReference type="InterPro" id="IPR024931">
    <property type="entry name" value="Importin_alpha"/>
</dbReference>
<dbReference type="PANTHER" id="PTHR23316">
    <property type="entry name" value="IMPORTIN ALPHA"/>
    <property type="match status" value="1"/>
</dbReference>
<dbReference type="Pfam" id="PF00514">
    <property type="entry name" value="Arm"/>
    <property type="match status" value="8"/>
</dbReference>
<dbReference type="Pfam" id="PF16186">
    <property type="entry name" value="Arm_3"/>
    <property type="match status" value="1"/>
</dbReference>
<dbReference type="Pfam" id="PF01749">
    <property type="entry name" value="IBB"/>
    <property type="match status" value="1"/>
</dbReference>
<dbReference type="PIRSF" id="PIRSF005673">
    <property type="entry name" value="Importin_alpha"/>
    <property type="match status" value="1"/>
</dbReference>
<dbReference type="SMART" id="SM00185">
    <property type="entry name" value="ARM"/>
    <property type="match status" value="8"/>
</dbReference>
<dbReference type="SUPFAM" id="SSF48371">
    <property type="entry name" value="ARM repeat"/>
    <property type="match status" value="1"/>
</dbReference>
<dbReference type="PROSITE" id="PS50176">
    <property type="entry name" value="ARM_REPEAT"/>
    <property type="match status" value="4"/>
</dbReference>
<dbReference type="PROSITE" id="PS51214">
    <property type="entry name" value="IBB"/>
    <property type="match status" value="1"/>
</dbReference>
<organism>
    <name type="scientific">Gallus gallus</name>
    <name type="common">Chicken</name>
    <dbReference type="NCBI Taxonomy" id="9031"/>
    <lineage>
        <taxon>Eukaryota</taxon>
        <taxon>Metazoa</taxon>
        <taxon>Chordata</taxon>
        <taxon>Craniata</taxon>
        <taxon>Vertebrata</taxon>
        <taxon>Euteleostomi</taxon>
        <taxon>Archelosauria</taxon>
        <taxon>Archosauria</taxon>
        <taxon>Dinosauria</taxon>
        <taxon>Saurischia</taxon>
        <taxon>Theropoda</taxon>
        <taxon>Coelurosauria</taxon>
        <taxon>Aves</taxon>
        <taxon>Neognathae</taxon>
        <taxon>Galloanserae</taxon>
        <taxon>Galliformes</taxon>
        <taxon>Phasianidae</taxon>
        <taxon>Phasianinae</taxon>
        <taxon>Gallus</taxon>
    </lineage>
</organism>
<comment type="function">
    <text evidence="2">Essential for selective protein import into nucleus. Promotes signal-dependent binding of karyophilic proteins to the nuclear envelope.</text>
</comment>
<comment type="subunit">
    <text evidence="2">Forms a complex with importin subunit beta-1.</text>
</comment>
<comment type="subcellular location">
    <subcellularLocation>
        <location evidence="2">Cytoplasm</location>
    </subcellularLocation>
    <subcellularLocation>
        <location evidence="2">Nucleus</location>
    </subcellularLocation>
</comment>
<comment type="domain">
    <text evidence="2">The importin beta binding domain (IBB domain), which is sufficient for binding importin beta and essential for nuclear protein import confers import only, but not re-export out of the nucleus.</text>
</comment>
<comment type="similarity">
    <text evidence="5">Belongs to the importin alpha family.</text>
</comment>
<proteinExistence type="evidence at transcript level"/>
<name>IMA5_CHICK</name>
<reference key="1">
    <citation type="journal article" date="2005" name="Genome Biol.">
        <title>Full-length cDNAs from chicken bursal lymphocytes to facilitate gene function analysis.</title>
        <authorList>
            <person name="Caldwell R.B."/>
            <person name="Kierzek A.M."/>
            <person name="Arakawa H."/>
            <person name="Bezzubov Y."/>
            <person name="Zaim J."/>
            <person name="Fiedler P."/>
            <person name="Kutter S."/>
            <person name="Blagodatski A."/>
            <person name="Kostovska D."/>
            <person name="Koter M."/>
            <person name="Plachy J."/>
            <person name="Carninci P."/>
            <person name="Hayashizaki Y."/>
            <person name="Buerstedde J.-M."/>
        </authorList>
    </citation>
    <scope>NUCLEOTIDE SEQUENCE [LARGE SCALE MRNA]</scope>
    <source>
        <strain>CB</strain>
        <tissue>Bursa of Fabricius</tissue>
    </source>
</reference>
<sequence length="538" mass="60195">MTTSGKENFRLKSYKNKSLNPDEMRRRREEEGLQLRKQKREEQLFKRRNVATAEEEAEEEVMSDGGFHEAQMNNMEMTSSAVITSDMIEMIFSNSPEQQLSATQKFRKLLSKEPNPPIDEVISTPGVVARFVEFLKRKENCTLQFEAAWVLTNIASGNSLQTRIVIQAGAVPIFIELLSSEFEDVQEQAVWALGNIAGDSTMCRDYVLDCNILPPLLQLLSKQNRITMTRNAVWALSNLCRGKNPPPDFAKVSPCLSVLSWLLFVNDTDVLADACWALSYLSDGPNDKIQAVIDAGVCRRLVELLMHNDYKVVSPALRAVGNIVTGDDIQTQVILNCSALQSLLHLLSSPKESIKKEACWTISNITAGNRAQIQTVIDAHIFPALINILQTAEFRTRKEAAWAITNATSGGSAEQIKYLVELGCIKPLCDLLTVMDSKIVQVALSGLENILRLGEQESKRSGAGINPYCALIEEAYGLDKIEFLQSHENQEIYQKAFDLIEHYFGTEDEDSSIAPQVDLSQQQYIFQQCEAPMEGFQL</sequence>
<keyword id="KW-0963">Cytoplasm</keyword>
<keyword id="KW-0539">Nucleus</keyword>
<keyword id="KW-0653">Protein transport</keyword>
<keyword id="KW-1185">Reference proteome</keyword>
<keyword id="KW-0677">Repeat</keyword>
<keyword id="KW-0813">Transport</keyword>